<accession>A5DQP9</accession>
<accession>Q0ZIE9</accession>
<accession>Q6H196</accession>
<accession>Q6JEI6</accession>
<accession>Q6JEI7</accession>
<accession>Q7LLJ7</accession>
<accession>Q7Z9A4</accession>
<accession>Q7Z9B7</accession>
<accession>Q7Z9G3</accession>
<accession>Q9P337</accession>
<reference key="1">
    <citation type="journal article" date="2009" name="Nature">
        <title>Evolution of pathogenicity and sexual reproduction in eight Candida genomes.</title>
        <authorList>
            <person name="Butler G."/>
            <person name="Rasmussen M.D."/>
            <person name="Lin M.F."/>
            <person name="Santos M.A.S."/>
            <person name="Sakthikumar S."/>
            <person name="Munro C.A."/>
            <person name="Rheinbay E."/>
            <person name="Grabherr M."/>
            <person name="Forche A."/>
            <person name="Reedy J.L."/>
            <person name="Agrafioti I."/>
            <person name="Arnaud M.B."/>
            <person name="Bates S."/>
            <person name="Brown A.J.P."/>
            <person name="Brunke S."/>
            <person name="Costanzo M.C."/>
            <person name="Fitzpatrick D.A."/>
            <person name="de Groot P.W.J."/>
            <person name="Harris D."/>
            <person name="Hoyer L.L."/>
            <person name="Hube B."/>
            <person name="Klis F.M."/>
            <person name="Kodira C."/>
            <person name="Lennard N."/>
            <person name="Logue M.E."/>
            <person name="Martin R."/>
            <person name="Neiman A.M."/>
            <person name="Nikolaou E."/>
            <person name="Quail M.A."/>
            <person name="Quinn J."/>
            <person name="Santos M.C."/>
            <person name="Schmitzberger F.F."/>
            <person name="Sherlock G."/>
            <person name="Shah P."/>
            <person name="Silverstein K.A.T."/>
            <person name="Skrzypek M.S."/>
            <person name="Soll D."/>
            <person name="Staggs R."/>
            <person name="Stansfield I."/>
            <person name="Stumpf M.P.H."/>
            <person name="Sudbery P.E."/>
            <person name="Srikantha T."/>
            <person name="Zeng Q."/>
            <person name="Berman J."/>
            <person name="Berriman M."/>
            <person name="Heitman J."/>
            <person name="Gow N.A.R."/>
            <person name="Lorenz M.C."/>
            <person name="Birren B.W."/>
            <person name="Kellis M."/>
            <person name="Cuomo C.A."/>
        </authorList>
    </citation>
    <scope>NUCLEOTIDE SEQUENCE [LARGE SCALE GENOMIC DNA]</scope>
    <source>
        <strain>ATCC 6260 / CBS 566 / DSM 6381 / JCM 1539 / NBRC 10279 / NRRL Y-324</strain>
    </source>
</reference>
<reference key="2">
    <citation type="journal article" date="2001" name="Int. J. Syst. Evol. Microbiol.">
        <title>Partial sequence analysis of the actin gene and its potential for studying the phylogeny of Candida species and their teleomorphs.</title>
        <authorList>
            <person name="Daniel H.-M."/>
            <person name="Sorrell T.C."/>
            <person name="Meyer W."/>
        </authorList>
    </citation>
    <scope>NUCLEOTIDE SEQUENCE [GENOMIC DNA] OF 18-343</scope>
    <source>
        <strain>ATCC 46036 / CBS 2030 / IFO 10106 / NRRL Y-2075</strain>
        <strain>ATCC 6260 / CBS 566 / DSM 6381 / JCM 1539 / NBRC 10279 / NRRL Y-324</strain>
    </source>
</reference>
<reference key="3">
    <citation type="journal article" date="2003" name="Int. J. Food Microbiol.">
        <title>Evaluation of ribosomal RNA and actin gene sequences for the identification of ascomycetous yeasts.</title>
        <authorList>
            <person name="Daniel H.-M."/>
            <person name="Meyer W."/>
        </authorList>
    </citation>
    <scope>NUCLEOTIDE SEQUENCE [GENOMIC DNA] OF 18-343</scope>
    <source>
        <strain>ATCC 28873 / CBS 5265 / NRRL Y-17844</strain>
        <strain>ATCC 58070 / CBS 2031 / IFO 10107 / NRRL Y-2076</strain>
    </source>
</reference>
<reference key="4">
    <citation type="journal article" date="2004" name="J. Clin. Microbiol.">
        <title>Phylogeny and evolution of medical species of Candida and related taxa: a multigenic analysis.</title>
        <authorList>
            <person name="Diezmann S."/>
            <person name="Cox C.J."/>
            <person name="Schoenian G."/>
            <person name="Vilgalys R.J."/>
            <person name="Mitchell T.G."/>
        </authorList>
    </citation>
    <scope>NUCLEOTIDE SEQUENCE [GENOMIC DNA] OF 67-229</scope>
    <source>
        <strain>ATCC 6260 / CBS 566 / DSM 6381 / JCM 1539 / NBRC 10279 / NRRL Y-324</strain>
        <strain>MMRL 1635</strain>
        <strain>MMRL 1636</strain>
        <strain>MMRL 1759</strain>
    </source>
</reference>
<feature type="chain" id="PRO_0000295033" description="Actin">
    <location>
        <begin position="1"/>
        <end position="360"/>
    </location>
</feature>
<keyword id="KW-0067">ATP-binding</keyword>
<keyword id="KW-0963">Cytoplasm</keyword>
<keyword id="KW-0206">Cytoskeleton</keyword>
<keyword id="KW-0378">Hydrolase</keyword>
<keyword id="KW-0547">Nucleotide-binding</keyword>
<keyword id="KW-1185">Reference proteome</keyword>
<dbReference type="EC" id="3.6.4.-" evidence="1"/>
<dbReference type="EMBL" id="CH408161">
    <property type="protein sequence ID" value="EDK41502.1"/>
    <property type="molecule type" value="Genomic_DNA"/>
</dbReference>
<dbReference type="EMBL" id="AJ389063">
    <property type="protein sequence ID" value="CAC00703.2"/>
    <property type="molecule type" value="Genomic_DNA"/>
</dbReference>
<dbReference type="EMBL" id="AJ389064">
    <property type="protein sequence ID" value="CAC00704.2"/>
    <property type="molecule type" value="Genomic_DNA"/>
</dbReference>
<dbReference type="EMBL" id="AJ508469">
    <property type="protein sequence ID" value="CAD48340.1"/>
    <property type="molecule type" value="Genomic_DNA"/>
</dbReference>
<dbReference type="EMBL" id="AJ508515">
    <property type="protein sequence ID" value="CAD48386.1"/>
    <property type="molecule type" value="Genomic_DNA"/>
</dbReference>
<dbReference type="EMBL" id="AJ508528">
    <property type="protein sequence ID" value="CAD48399.1"/>
    <property type="molecule type" value="Genomic_DNA"/>
</dbReference>
<dbReference type="EMBL" id="AY497592">
    <property type="protein sequence ID" value="AAT12519.1"/>
    <property type="molecule type" value="Genomic_DNA"/>
</dbReference>
<dbReference type="EMBL" id="AY497593">
    <property type="protein sequence ID" value="AAT12520.1"/>
    <property type="molecule type" value="Genomic_DNA"/>
</dbReference>
<dbReference type="EMBL" id="AY497594">
    <property type="protein sequence ID" value="AAT47719.1"/>
    <property type="molecule type" value="Genomic_DNA"/>
</dbReference>
<dbReference type="EMBL" id="DQ447210">
    <property type="protein sequence ID" value="ABE27291.1"/>
    <property type="molecule type" value="Genomic_DNA"/>
</dbReference>
<dbReference type="RefSeq" id="XP_001482580.1">
    <property type="nucleotide sequence ID" value="XM_001482530.1"/>
</dbReference>
<dbReference type="SMR" id="A5DQP9"/>
<dbReference type="FunCoup" id="A5DQP9">
    <property type="interactions" value="1353"/>
</dbReference>
<dbReference type="STRING" id="294746.A5DQP9"/>
<dbReference type="GeneID" id="5124165"/>
<dbReference type="KEGG" id="pgu:PGUG_05600"/>
<dbReference type="eggNOG" id="KOG0676">
    <property type="taxonomic scope" value="Eukaryota"/>
</dbReference>
<dbReference type="HOGENOM" id="CLU_027965_0_2_1"/>
<dbReference type="InParanoid" id="A5DQP9"/>
<dbReference type="OMA" id="FHTTAER"/>
<dbReference type="OrthoDB" id="5132116at2759"/>
<dbReference type="Proteomes" id="UP000001997">
    <property type="component" value="Unassembled WGS sequence"/>
</dbReference>
<dbReference type="GO" id="GO:0005737">
    <property type="term" value="C:cytoplasm"/>
    <property type="evidence" value="ECO:0007669"/>
    <property type="project" value="UniProtKB-KW"/>
</dbReference>
<dbReference type="GO" id="GO:0005856">
    <property type="term" value="C:cytoskeleton"/>
    <property type="evidence" value="ECO:0007669"/>
    <property type="project" value="UniProtKB-SubCell"/>
</dbReference>
<dbReference type="GO" id="GO:0005524">
    <property type="term" value="F:ATP binding"/>
    <property type="evidence" value="ECO:0007669"/>
    <property type="project" value="UniProtKB-KW"/>
</dbReference>
<dbReference type="GO" id="GO:0016787">
    <property type="term" value="F:hydrolase activity"/>
    <property type="evidence" value="ECO:0007669"/>
    <property type="project" value="UniProtKB-KW"/>
</dbReference>
<dbReference type="CDD" id="cd10224">
    <property type="entry name" value="ASKHA_NBD_actin"/>
    <property type="match status" value="1"/>
</dbReference>
<dbReference type="FunFam" id="2.30.36.70:FF:000001">
    <property type="entry name" value="Actin, alpha skeletal muscle"/>
    <property type="match status" value="1"/>
</dbReference>
<dbReference type="FunFam" id="3.30.420.40:FF:000291">
    <property type="entry name" value="Actin, alpha skeletal muscle"/>
    <property type="match status" value="1"/>
</dbReference>
<dbReference type="FunFam" id="3.90.640.10:FF:000001">
    <property type="entry name" value="Actin, muscle"/>
    <property type="match status" value="1"/>
</dbReference>
<dbReference type="FunFam" id="3.30.420.40:FF:000404">
    <property type="entry name" value="Major actin"/>
    <property type="match status" value="1"/>
</dbReference>
<dbReference type="FunFam" id="3.30.420.40:FF:000058">
    <property type="entry name" value="Putative actin-related protein 5"/>
    <property type="match status" value="1"/>
</dbReference>
<dbReference type="Gene3D" id="3.30.420.40">
    <property type="match status" value="2"/>
</dbReference>
<dbReference type="Gene3D" id="3.90.640.10">
    <property type="entry name" value="Actin, Chain A, domain 4"/>
    <property type="match status" value="1"/>
</dbReference>
<dbReference type="InterPro" id="IPR004000">
    <property type="entry name" value="Actin"/>
</dbReference>
<dbReference type="InterPro" id="IPR020902">
    <property type="entry name" value="Actin/actin-like_CS"/>
</dbReference>
<dbReference type="InterPro" id="IPR004001">
    <property type="entry name" value="Actin_CS"/>
</dbReference>
<dbReference type="InterPro" id="IPR043129">
    <property type="entry name" value="ATPase_NBD"/>
</dbReference>
<dbReference type="PANTHER" id="PTHR11937">
    <property type="entry name" value="ACTIN"/>
    <property type="match status" value="1"/>
</dbReference>
<dbReference type="Pfam" id="PF00022">
    <property type="entry name" value="Actin"/>
    <property type="match status" value="1"/>
</dbReference>
<dbReference type="PRINTS" id="PR00190">
    <property type="entry name" value="ACTIN"/>
</dbReference>
<dbReference type="SMART" id="SM00268">
    <property type="entry name" value="ACTIN"/>
    <property type="match status" value="1"/>
</dbReference>
<dbReference type="SUPFAM" id="SSF53067">
    <property type="entry name" value="Actin-like ATPase domain"/>
    <property type="match status" value="2"/>
</dbReference>
<dbReference type="PROSITE" id="PS00406">
    <property type="entry name" value="ACTINS_1"/>
    <property type="match status" value="1"/>
</dbReference>
<dbReference type="PROSITE" id="PS00432">
    <property type="entry name" value="ACTINS_2"/>
    <property type="match status" value="1"/>
</dbReference>
<dbReference type="PROSITE" id="PS01132">
    <property type="entry name" value="ACTINS_ACT_LIKE"/>
    <property type="match status" value="1"/>
</dbReference>
<organism>
    <name type="scientific">Meyerozyma guilliermondii (strain ATCC 6260 / CBS 566 / DSM 6381 / JCM 1539 / NBRC 10279 / NRRL Y-324)</name>
    <name type="common">Yeast</name>
    <name type="synonym">Candida guilliermondii</name>
    <dbReference type="NCBI Taxonomy" id="294746"/>
    <lineage>
        <taxon>Eukaryota</taxon>
        <taxon>Fungi</taxon>
        <taxon>Dikarya</taxon>
        <taxon>Ascomycota</taxon>
        <taxon>Saccharomycotina</taxon>
        <taxon>Pichiomycetes</taxon>
        <taxon>Debaryomycetaceae</taxon>
        <taxon>Meyerozyma</taxon>
    </lineage>
</organism>
<evidence type="ECO:0000250" key="1">
    <source>
        <dbReference type="UniProtKB" id="P60010"/>
    </source>
</evidence>
<evidence type="ECO:0000305" key="2"/>
<proteinExistence type="inferred from homology"/>
<gene>
    <name type="primary">ACT1</name>
    <name type="ORF">PGUG_05600</name>
</gene>
<name>ACT_PICGU</name>
<comment type="function">
    <text>Actins are highly conserved proteins that are involved in various types of cell motility and are ubiquitously expressed in all eukaryotic cells.</text>
</comment>
<comment type="catalytic activity">
    <reaction evidence="1">
        <text>ATP + H2O = ADP + phosphate + H(+)</text>
        <dbReference type="Rhea" id="RHEA:13065"/>
        <dbReference type="ChEBI" id="CHEBI:15377"/>
        <dbReference type="ChEBI" id="CHEBI:15378"/>
        <dbReference type="ChEBI" id="CHEBI:30616"/>
        <dbReference type="ChEBI" id="CHEBI:43474"/>
        <dbReference type="ChEBI" id="CHEBI:456216"/>
    </reaction>
</comment>
<comment type="subcellular location">
    <subcellularLocation>
        <location>Cytoplasm</location>
        <location>Cytoskeleton</location>
    </subcellularLocation>
</comment>
<comment type="similarity">
    <text evidence="2">Belongs to the actin family.</text>
</comment>
<protein>
    <recommendedName>
        <fullName>Actin</fullName>
        <ecNumber evidence="1">3.6.4.-</ecNumber>
    </recommendedName>
</protein>
<sequence length="360" mass="40371">MCKAGFAGDDAPRAVFPSIVGRPRHQGIMVGMGQRDSYVGDEAQSKRGILTLRYPIEHGIVKNWDDMEKIWHHTFYNELRVAPEEHPVLLTEAPMNPKLNREKMTQIMFETFNVPAFYVNIQAVLSLYSSGRTTGIVLDSGDGVTHVVPIYAGFSLPHGILRLDLAGRDLTDYLMKILSERGYTFTTTAEREIVRDIKEKLCYVALDFEQEMQTSSQSSAIEKSYELPDGQVITIGNERFRAVEALFRPSDLGLEAAGIDQTTYNSIIKCDLDVRKELYGNIVMSGGTTMFPGIAERMQKEITALAPSSMKVKIIAPPERKYSVWIGGSILASLSTFQQMWISKQEYDESGPSIVHHKCF</sequence>